<feature type="initiator methionine" description="Removed" evidence="2 3">
    <location>
        <position position="1"/>
    </location>
</feature>
<feature type="chain" id="PRO_0000200341" description="Cytochrome b559 subunit alpha">
    <location>
        <begin position="2"/>
        <end position="83"/>
    </location>
</feature>
<feature type="transmembrane region" description="Helical" evidence="1">
    <location>
        <begin position="21"/>
        <end position="35"/>
    </location>
</feature>
<feature type="binding site" description="axial binding residue" evidence="1">
    <location>
        <position position="23"/>
    </location>
    <ligand>
        <name>heme</name>
        <dbReference type="ChEBI" id="CHEBI:30413"/>
        <note>ligand shared with beta subunit</note>
    </ligand>
    <ligandPart>
        <name>Fe</name>
        <dbReference type="ChEBI" id="CHEBI:18248"/>
    </ligandPart>
</feature>
<feature type="sequence conflict" description="In Ref. 3; BAB47050." evidence="4" ref="3">
    <original>P</original>
    <variation>L</variation>
    <location>
        <position position="50"/>
    </location>
</feature>
<reference key="1">
    <citation type="journal article" date="1986" name="Mol. Gen. Genet.">
        <title>Location and nucleotide sequence of the gene for cytochrome b-559 in wheat chloroplast DNA.</title>
        <authorList>
            <person name="Hird S.M."/>
            <person name="Willey D.L."/>
            <person name="Dyer T.A."/>
            <person name="Gray J.C."/>
        </authorList>
    </citation>
    <scope>NUCLEOTIDE SEQUENCE [GENOMIC DNA]</scope>
</reference>
<reference key="2">
    <citation type="journal article" date="1989" name="Plant Mol. Biol.">
        <title>A photosystem II polypeptide is encoded by an open reading frame co-transcribed with genes for cytochrome b-559 in wheat chloroplast DNA.</title>
        <authorList>
            <person name="Webber A.N."/>
            <person name="Hird S.M."/>
            <person name="Packman L.C."/>
            <person name="Dyer T.A."/>
            <person name="Gray J.C."/>
        </authorList>
    </citation>
    <scope>NUCLEOTIDE SEQUENCE [GENOMIC DNA]</scope>
    <scope>PROTEIN SEQUENCE OF 2-16</scope>
    <source>
        <strain>cv. Sentry</strain>
        <tissue>Leaf</tissue>
    </source>
</reference>
<reference key="3">
    <citation type="journal article" date="2000" name="Plant Mol. Biol. Rep.">
        <title>Chinese spring wheat (Triticum aestivum L.) chloroplast genome: complete sequence and contig clones.</title>
        <authorList>
            <person name="Ogihara Y."/>
            <person name="Isono K."/>
            <person name="Kojima T."/>
            <person name="Endo A."/>
            <person name="Hanaoka M."/>
            <person name="Shiina T."/>
            <person name="Terachi T."/>
            <person name="Utsugi S."/>
            <person name="Murata M."/>
            <person name="Mori N."/>
            <person name="Takumi S."/>
            <person name="Ikeo K."/>
            <person name="Gojobori T."/>
            <person name="Murai R."/>
            <person name="Murai K."/>
            <person name="Matsuoka Y."/>
            <person name="Ohnishi Y."/>
            <person name="Tajiri H."/>
            <person name="Tsunewaki K."/>
        </authorList>
    </citation>
    <scope>NUCLEOTIDE SEQUENCE [LARGE SCALE GENOMIC DNA]</scope>
    <source>
        <strain>cv. Chinese Spring</strain>
    </source>
</reference>
<reference key="4">
    <citation type="journal article" date="1989" name="FEBS Lett.">
        <title>N-terminal sequencing of photosystem II low-molecular-mass proteins. 5 and 4.1 kDa components of the O2-evolving core complex from higher plants.</title>
        <authorList>
            <person name="Ikeuchi M."/>
            <person name="Takio K."/>
            <person name="Inoue Y."/>
        </authorList>
    </citation>
    <scope>PROTEIN SEQUENCE OF 2-15</scope>
</reference>
<comment type="function">
    <text evidence="1">This b-type cytochrome is tightly associated with the reaction center of photosystem II (PSII). PSII is a light-driven water:plastoquinone oxidoreductase that uses light energy to abstract electrons from H(2)O, generating O(2) and a proton gradient subsequently used for ATP formation. It consists of a core antenna complex that captures photons, and an electron transfer chain that converts photonic excitation into a charge separation.</text>
</comment>
<comment type="cofactor">
    <cofactor evidence="1">
        <name>heme b</name>
        <dbReference type="ChEBI" id="CHEBI:60344"/>
    </cofactor>
    <text evidence="1">With its partner (PsbF) binds heme. PSII binds additional chlorophylls, carotenoids and specific lipids.</text>
</comment>
<comment type="subunit">
    <text evidence="1">Heterodimer of an alpha subunit and a beta subunit. PSII is composed of 1 copy each of membrane proteins PsbA, PsbB, PsbC, PsbD, PsbE, PsbF, PsbH, PsbI, PsbJ, PsbK, PsbL, PsbM, PsbT, PsbX, PsbY, PsbZ, Psb30/Ycf12, at least 3 peripheral proteins of the oxygen-evolving complex and a large number of cofactors. It forms dimeric complexes.</text>
</comment>
<comment type="subcellular location">
    <subcellularLocation>
        <location evidence="1">Plastid</location>
        <location evidence="1">Chloroplast thylakoid membrane</location>
        <topology evidence="1">Single-pass membrane protein</topology>
    </subcellularLocation>
</comment>
<comment type="similarity">
    <text evidence="1">Belongs to the PsbE/PsbF family.</text>
</comment>
<name>PSBE_WHEAT</name>
<dbReference type="EMBL" id="X03776">
    <property type="protein sequence ID" value="CAA27405.1"/>
    <property type="molecule type" value="Genomic_DNA"/>
</dbReference>
<dbReference type="EMBL" id="X15225">
    <property type="protein sequence ID" value="CAA33294.1"/>
    <property type="molecule type" value="Genomic_DNA"/>
</dbReference>
<dbReference type="EMBL" id="AB042240">
    <property type="protein sequence ID" value="BAB47050.1"/>
    <property type="molecule type" value="Genomic_DNA"/>
</dbReference>
<dbReference type="PIR" id="S03621">
    <property type="entry name" value="CBWT5E"/>
</dbReference>
<dbReference type="RefSeq" id="NP_114275.1">
    <property type="nucleotide sequence ID" value="NC_002762.1"/>
</dbReference>
<dbReference type="SMR" id="P69386"/>
<dbReference type="STRING" id="4565.P69386"/>
<dbReference type="PaxDb" id="4565-EPlTAEP00000010041"/>
<dbReference type="EnsemblPlants" id="TraesARI1A03G00074290.1">
    <property type="protein sequence ID" value="TraesARI1A03G00074290.1.CDS1"/>
    <property type="gene ID" value="TraesARI1A03G00074290"/>
</dbReference>
<dbReference type="EnsemblPlants" id="TraesARI1D03G00531660.1">
    <property type="protein sequence ID" value="TraesARI1D03G00531660.1.CDS1"/>
    <property type="gene ID" value="TraesARI1D03G00531660"/>
</dbReference>
<dbReference type="EnsemblPlants" id="TraesARI2D03G01206590.1">
    <property type="protein sequence ID" value="TraesARI2D03G01206590.1.CDS1"/>
    <property type="gene ID" value="TraesARI2D03G01206590"/>
</dbReference>
<dbReference type="EnsemblPlants" id="TraesARI2D03G01311340.1">
    <property type="protein sequence ID" value="TraesARI2D03G01311340.1.CDS1"/>
    <property type="gene ID" value="TraesARI2D03G01311340"/>
</dbReference>
<dbReference type="EnsemblPlants" id="TraesARIUn03G04713460.1">
    <property type="protein sequence ID" value="TraesARIUn03G04713460.1.CDS1"/>
    <property type="gene ID" value="TraesARIUn03G04713460"/>
</dbReference>
<dbReference type="EnsemblPlants" id="TraesCAD_scaffold_023365_01G000100.1">
    <property type="protein sequence ID" value="TraesCAD_scaffold_023365_01G000100.1"/>
    <property type="gene ID" value="TraesCAD_scaffold_023365_01G000100"/>
</dbReference>
<dbReference type="EnsemblPlants" id="TraesCS1A02G148500.1">
    <property type="protein sequence ID" value="TraesCS1A02G148500.1.cds1"/>
    <property type="gene ID" value="TraesCS1A02G148500"/>
</dbReference>
<dbReference type="EnsemblPlants" id="TraesCS1A03G0400900.1">
    <property type="protein sequence ID" value="TraesCS1A03G0400900.1.CDS1"/>
    <property type="gene ID" value="TraesCS1A03G0400900"/>
</dbReference>
<dbReference type="EnsemblPlants" id="TraesCS1D02G295400.1">
    <property type="protein sequence ID" value="TraesCS1D02G295400.1.cds1"/>
    <property type="gene ID" value="TraesCS1D02G295400"/>
</dbReference>
<dbReference type="EnsemblPlants" id="TraesCS1D03G0706300.1">
    <property type="protein sequence ID" value="TraesCS1D03G0706300.1.CDS1"/>
    <property type="gene ID" value="TraesCS1D03G0706300"/>
</dbReference>
<dbReference type="EnsemblPlants" id="TraesCS2D02G270700.1">
    <property type="protein sequence ID" value="TraesCS2D02G270700.1.cds1"/>
    <property type="gene ID" value="TraesCS2D02G270700"/>
</dbReference>
<dbReference type="EnsemblPlants" id="TraesCS2D02G553800.1">
    <property type="protein sequence ID" value="TraesCS2D02G553800.1.cds1"/>
    <property type="gene ID" value="TraesCS2D02G553800"/>
</dbReference>
<dbReference type="EnsemblPlants" id="TraesCS2D03G0626300.1">
    <property type="protein sequence ID" value="TraesCS2D03G0626300.1.CDS1"/>
    <property type="gene ID" value="TraesCS2D03G0626300"/>
</dbReference>
<dbReference type="EnsemblPlants" id="TraesCS2D03G1232500.1">
    <property type="protein sequence ID" value="TraesCS2D03G1232500.1.CDS1"/>
    <property type="gene ID" value="TraesCS2D03G1232500"/>
</dbReference>
<dbReference type="EnsemblPlants" id="TraesCS6D03G0762500.1">
    <property type="protein sequence ID" value="TraesCS6D03G0762500.1.CDS1"/>
    <property type="gene ID" value="TraesCS6D03G0762500"/>
</dbReference>
<dbReference type="EnsemblPlants" id="TraesCSU02G261900.1">
    <property type="protein sequence ID" value="TraesCSU02G261900.1.cds1"/>
    <property type="gene ID" value="TraesCSU02G261900"/>
</dbReference>
<dbReference type="EnsemblPlants" id="TraesCSU03G0512200.1">
    <property type="protein sequence ID" value="TraesCSU03G0512200.1.CDS1"/>
    <property type="gene ID" value="TraesCSU03G0512200"/>
</dbReference>
<dbReference type="EnsemblPlants" id="TraesJAG1A03G00072630.1">
    <property type="protein sequence ID" value="TraesJAG1A03G00072630.1.CDS1"/>
    <property type="gene ID" value="TraesJAG1A03G00072630"/>
</dbReference>
<dbReference type="EnsemblPlants" id="TraesJAG1D03G00525350.1">
    <property type="protein sequence ID" value="TraesJAG1D03G00525350.1.CDS1"/>
    <property type="gene ID" value="TraesJAG1D03G00525350"/>
</dbReference>
<dbReference type="EnsemblPlants" id="TraesJAG2D03G01196780.1">
    <property type="protein sequence ID" value="TraesJAG2D03G01196780.1.CDS1"/>
    <property type="gene ID" value="TraesJAG2D03G01196780"/>
</dbReference>
<dbReference type="EnsemblPlants" id="TraesJAG2D03G01300360.1">
    <property type="protein sequence ID" value="TraesJAG2D03G01300360.1.CDS1"/>
    <property type="gene ID" value="TraesJAG2D03G01300360"/>
</dbReference>
<dbReference type="EnsemblPlants" id="TraesJAGUn03G04586940.1">
    <property type="protein sequence ID" value="TraesJAGUn03G04586940.1.CDS1"/>
    <property type="gene ID" value="TraesJAGUn03G04586940"/>
</dbReference>
<dbReference type="EnsemblPlants" id="TraesJUL1A03G00072070.1">
    <property type="protein sequence ID" value="TraesJUL1A03G00072070.1.CDS1"/>
    <property type="gene ID" value="TraesJUL1A03G00072070"/>
</dbReference>
<dbReference type="EnsemblPlants" id="TraesJUL1D03G00528660.1">
    <property type="protein sequence ID" value="TraesJUL1D03G00528660.1.CDS1"/>
    <property type="gene ID" value="TraesJUL1D03G00528660"/>
</dbReference>
<dbReference type="EnsemblPlants" id="TraesJUL2D03G01196640.1">
    <property type="protein sequence ID" value="TraesJUL2D03G01196640.1.CDS1"/>
    <property type="gene ID" value="TraesJUL2D03G01196640"/>
</dbReference>
<dbReference type="EnsemblPlants" id="TraesJUL2D03G01303030.1">
    <property type="protein sequence ID" value="TraesJUL2D03G01303030.1.CDS1"/>
    <property type="gene ID" value="TraesJUL2D03G01303030"/>
</dbReference>
<dbReference type="EnsemblPlants" id="TraesJUL2D03G01304600.1">
    <property type="protein sequence ID" value="TraesJUL2D03G01304600.1.CDS1"/>
    <property type="gene ID" value="TraesJUL2D03G01304600"/>
</dbReference>
<dbReference type="EnsemblPlants" id="TraesKAR1A01G0166580.1">
    <property type="protein sequence ID" value="cds.TraesKAR1A01G0166580.1"/>
    <property type="gene ID" value="TraesKAR1A01G0166580"/>
</dbReference>
<dbReference type="EnsemblPlants" id="TraesKAR1D01G0283980.1">
    <property type="protein sequence ID" value="cds.TraesKAR1D01G0283980.1"/>
    <property type="gene ID" value="TraesKAR1D01G0283980"/>
</dbReference>
<dbReference type="EnsemblPlants" id="TraesKAR2B01G0069070.1">
    <property type="protein sequence ID" value="cds.TraesKAR2B01G0069070.1"/>
    <property type="gene ID" value="TraesKAR2B01G0069070"/>
</dbReference>
<dbReference type="EnsemblPlants" id="TraesKAR2D01G0244240.1">
    <property type="protein sequence ID" value="cds.TraesKAR2D01G0244240.1"/>
    <property type="gene ID" value="TraesKAR2D01G0244240"/>
</dbReference>
<dbReference type="EnsemblPlants" id="TraesKAR2D01G0456620.1">
    <property type="protein sequence ID" value="cds.TraesKAR2D01G0456620.1"/>
    <property type="gene ID" value="TraesKAR2D01G0456620"/>
</dbReference>
<dbReference type="EnsemblPlants" id="TraesKAR2D01G0458620.1">
    <property type="protein sequence ID" value="cds.TraesKAR2D01G0458620.1"/>
    <property type="gene ID" value="TraesKAR2D01G0458620"/>
</dbReference>
<dbReference type="EnsemblPlants" id="TraesKAR3D01G0037610.1">
    <property type="protein sequence ID" value="cds.TraesKAR3D01G0037610.1"/>
    <property type="gene ID" value="TraesKAR3D01G0037610"/>
</dbReference>
<dbReference type="EnsemblPlants" id="TraesKAR6B01G0219440.1">
    <property type="protein sequence ID" value="cds.TraesKAR6B01G0219440.1"/>
    <property type="gene ID" value="TraesKAR6B01G0219440"/>
</dbReference>
<dbReference type="EnsemblPlants" id="TraesKAR6B01G0220190.1">
    <property type="protein sequence ID" value="cds.TraesKAR6B01G0220190.1"/>
    <property type="gene ID" value="TraesKAR6B01G0220190"/>
</dbReference>
<dbReference type="EnsemblPlants" id="TraesKARUn01G0032930.1">
    <property type="protein sequence ID" value="cds.TraesKARUn01G0032930.1"/>
    <property type="gene ID" value="TraesKARUn01G0032930"/>
</dbReference>
<dbReference type="EnsemblPlants" id="TraesKARUn01G0035400.1">
    <property type="protein sequence ID" value="cds.TraesKARUn01G0035400.1"/>
    <property type="gene ID" value="TraesKARUn01G0035400"/>
</dbReference>
<dbReference type="EnsemblPlants" id="TraesKARUn01G0036580.1">
    <property type="protein sequence ID" value="cds.TraesKARUn01G0036580.1"/>
    <property type="gene ID" value="TraesKARUn01G0036580"/>
</dbReference>
<dbReference type="EnsemblPlants" id="TraesKARUn01G0036850.1">
    <property type="protein sequence ID" value="cds.TraesKARUn01G0036850.1"/>
    <property type="gene ID" value="TraesKARUn01G0036850"/>
</dbReference>
<dbReference type="EnsemblPlants" id="TraesKARUn01G0037150.1">
    <property type="protein sequence ID" value="cds.TraesKARUn01G0037150.1"/>
    <property type="gene ID" value="TraesKARUn01G0037150"/>
</dbReference>
<dbReference type="EnsemblPlants" id="TraesKARUn01G0064380.1">
    <property type="protein sequence ID" value="cds.TraesKARUn01G0064380.1"/>
    <property type="gene ID" value="TraesKARUn01G0064380"/>
</dbReference>
<dbReference type="EnsemblPlants" id="TraesKARUn01G0065690.1">
    <property type="protein sequence ID" value="cds.TraesKARUn01G0065690.1"/>
    <property type="gene ID" value="TraesKARUn01G0065690"/>
</dbReference>
<dbReference type="EnsemblPlants" id="TraesKARUn01G0065830.1">
    <property type="protein sequence ID" value="cds.TraesKARUn01G0065830.1"/>
    <property type="gene ID" value="TraesKARUn01G0065830"/>
</dbReference>
<dbReference type="EnsemblPlants" id="TraesKARUn01G0066310.1">
    <property type="protein sequence ID" value="cds.TraesKARUn01G0066310.1"/>
    <property type="gene ID" value="TraesKARUn01G0066310"/>
</dbReference>
<dbReference type="EnsemblPlants" id="TraesKARUn01G0066400.1">
    <property type="protein sequence ID" value="cds.TraesKARUn01G0066400.1"/>
    <property type="gene ID" value="TraesKARUn01G0066400"/>
</dbReference>
<dbReference type="EnsemblPlants" id="TraesKARUn01G0066500.1">
    <property type="protein sequence ID" value="cds.TraesKARUn01G0066500.1"/>
    <property type="gene ID" value="TraesKARUn01G0066500"/>
</dbReference>
<dbReference type="EnsemblPlants" id="TraesKARUn01G0067200.1">
    <property type="protein sequence ID" value="cds.TraesKARUn01G0067200.1"/>
    <property type="gene ID" value="TraesKARUn01G0067200"/>
</dbReference>
<dbReference type="EnsemblPlants" id="TraesKARUn01G0067860.1">
    <property type="protein sequence ID" value="cds.TraesKARUn01G0067860.1"/>
    <property type="gene ID" value="TraesKARUn01G0067860"/>
</dbReference>
<dbReference type="EnsemblPlants" id="TraesKARUn01G0069290.1">
    <property type="protein sequence ID" value="cds.TraesKARUn01G0069290.1"/>
    <property type="gene ID" value="TraesKARUn01G0069290"/>
</dbReference>
<dbReference type="EnsemblPlants" id="TraesKARUn01G0069710.1">
    <property type="protein sequence ID" value="cds.TraesKARUn01G0069710.1"/>
    <property type="gene ID" value="TraesKARUn01G0069710"/>
</dbReference>
<dbReference type="EnsemblPlants" id="TraesKARUn01G0070360.1">
    <property type="protein sequence ID" value="cds.TraesKARUn01G0070360.1"/>
    <property type="gene ID" value="TraesKARUn01G0070360"/>
</dbReference>
<dbReference type="EnsemblPlants" id="TraesKARUn01G0071530.1">
    <property type="protein sequence ID" value="cds.TraesKARUn01G0071530.1"/>
    <property type="gene ID" value="TraesKARUn01G0071530"/>
</dbReference>
<dbReference type="EnsemblPlants" id="TraesKARUn01G0071710.1">
    <property type="protein sequence ID" value="cds.TraesKARUn01G0071710.1"/>
    <property type="gene ID" value="TraesKARUn01G0071710"/>
</dbReference>
<dbReference type="EnsemblPlants" id="TraesKARUn01G0072440.1">
    <property type="protein sequence ID" value="cds.TraesKARUn01G0072440.1"/>
    <property type="gene ID" value="TraesKARUn01G0072440"/>
</dbReference>
<dbReference type="EnsemblPlants" id="TraesKARUn01G0080110.1">
    <property type="protein sequence ID" value="cds.TraesKARUn01G0080110.1"/>
    <property type="gene ID" value="TraesKARUn01G0080110"/>
</dbReference>
<dbReference type="EnsemblPlants" id="TraesKARUn01G0097030.1">
    <property type="protein sequence ID" value="cds.TraesKARUn01G0097030.1"/>
    <property type="gene ID" value="TraesKARUn01G0097030"/>
</dbReference>
<dbReference type="EnsemblPlants" id="TraesKARUn01G0097790.1">
    <property type="protein sequence ID" value="cds.TraesKARUn01G0097790.1"/>
    <property type="gene ID" value="TraesKARUn01G0097790"/>
</dbReference>
<dbReference type="EnsemblPlants" id="TraesKARUn01G0098460.1">
    <property type="protein sequence ID" value="cds.TraesKARUn01G0098460.1"/>
    <property type="gene ID" value="TraesKARUn01G0098460"/>
</dbReference>
<dbReference type="EnsemblPlants" id="TraesKARUn01G0098760.1">
    <property type="protein sequence ID" value="cds.TraesKARUn01G0098760.1"/>
    <property type="gene ID" value="TraesKARUn01G0098760"/>
</dbReference>
<dbReference type="EnsemblPlants" id="TraesKARUn01G0099050.1">
    <property type="protein sequence ID" value="cds.TraesKARUn01G0099050.1"/>
    <property type="gene ID" value="TraesKARUn01G0099050"/>
</dbReference>
<dbReference type="EnsemblPlants" id="TraesKARUn01G0099770.1">
    <property type="protein sequence ID" value="cds.TraesKARUn01G0099770.1"/>
    <property type="gene ID" value="TraesKARUn01G0099770"/>
</dbReference>
<dbReference type="EnsemblPlants" id="TraesKARUn01G0099910.1">
    <property type="protein sequence ID" value="cds.TraesKARUn01G0099910.1"/>
    <property type="gene ID" value="TraesKARUn01G0099910"/>
</dbReference>
<dbReference type="EnsemblPlants" id="TraesKARUn01G0100040.1">
    <property type="protein sequence ID" value="cds.TraesKARUn01G0100040.1"/>
    <property type="gene ID" value="TraesKARUn01G0100040"/>
</dbReference>
<dbReference type="EnsemblPlants" id="TraesKARUn01G0100210.1">
    <property type="protein sequence ID" value="cds.TraesKARUn01G0100210.1"/>
    <property type="gene ID" value="TraesKARUn01G0100210"/>
</dbReference>
<dbReference type="EnsemblPlants" id="TraesKARUn01G0105470.1">
    <property type="protein sequence ID" value="cds.TraesKARUn01G0105470.1"/>
    <property type="gene ID" value="TraesKARUn01G0105470"/>
</dbReference>
<dbReference type="EnsemblPlants" id="TraesKARUn01G0115840.1">
    <property type="protein sequence ID" value="cds.TraesKARUn01G0115840.1"/>
    <property type="gene ID" value="TraesKARUn01G0115840"/>
</dbReference>
<dbReference type="EnsemblPlants" id="TraesKARUn01G0116060.1">
    <property type="protein sequence ID" value="cds.TraesKARUn01G0116060.1"/>
    <property type="gene ID" value="TraesKARUn01G0116060"/>
</dbReference>
<dbReference type="EnsemblPlants" id="TraesKARUn01G0116610.1">
    <property type="protein sequence ID" value="cds.TraesKARUn01G0116610.1"/>
    <property type="gene ID" value="TraesKARUn01G0116610"/>
</dbReference>
<dbReference type="EnsemblPlants" id="TraesKARUn01G0116800.1">
    <property type="protein sequence ID" value="cds.TraesKARUn01G0116800.1"/>
    <property type="gene ID" value="TraesKARUn01G0116800"/>
</dbReference>
<dbReference type="EnsemblPlants" id="TraesKARUn01G0116910.1">
    <property type="protein sequence ID" value="cds.TraesKARUn01G0116910.1"/>
    <property type="gene ID" value="TraesKARUn01G0116910"/>
</dbReference>
<dbReference type="EnsemblPlants" id="TraesKARUn01G0116980.1">
    <property type="protein sequence ID" value="cds.TraesKARUn01G0116980.1"/>
    <property type="gene ID" value="TraesKARUn01G0116980"/>
</dbReference>
<dbReference type="EnsemblPlants" id="TraesKARUn01G0123280.1">
    <property type="protein sequence ID" value="cds.TraesKARUn01G0123280.1"/>
    <property type="gene ID" value="TraesKARUn01G0123280"/>
</dbReference>
<dbReference type="EnsemblPlants" id="TraesKARUn01G0123430.1">
    <property type="protein sequence ID" value="cds.TraesKARUn01G0123430.1"/>
    <property type="gene ID" value="TraesKARUn01G0123430"/>
</dbReference>
<dbReference type="EnsemblPlants" id="TraesKARUn01G0123600.1">
    <property type="protein sequence ID" value="cds.TraesKARUn01G0123600.1"/>
    <property type="gene ID" value="TraesKARUn01G0123600"/>
</dbReference>
<dbReference type="EnsemblPlants" id="TraesKARUn01G0125370.1">
    <property type="protein sequence ID" value="cds.TraesKARUn01G0125370.1"/>
    <property type="gene ID" value="TraesKARUn01G0125370"/>
</dbReference>
<dbReference type="EnsemblPlants" id="TraesKARUn01G0130610.1">
    <property type="protein sequence ID" value="cds.TraesKARUn01G0130610.1"/>
    <property type="gene ID" value="TraesKARUn01G0130610"/>
</dbReference>
<dbReference type="EnsemblPlants" id="TraesKARUn01G0140990.1">
    <property type="protein sequence ID" value="cds.TraesKARUn01G0140990.1"/>
    <property type="gene ID" value="TraesKARUn01G0140990"/>
</dbReference>
<dbReference type="EnsemblPlants" id="TraesKARUn01G0141950.1">
    <property type="protein sequence ID" value="cds.TraesKARUn01G0141950.1"/>
    <property type="gene ID" value="TraesKARUn01G0141950"/>
</dbReference>
<dbReference type="EnsemblPlants" id="TraesKARUn01G0148440.1">
    <property type="protein sequence ID" value="cds.TraesKARUn01G0148440.1"/>
    <property type="gene ID" value="TraesKARUn01G0148440"/>
</dbReference>
<dbReference type="EnsemblPlants" id="TraesKARUn01G0149110.1">
    <property type="protein sequence ID" value="cds.TraesKARUn01G0149110.1"/>
    <property type="gene ID" value="TraesKARUn01G0149110"/>
</dbReference>
<dbReference type="EnsemblPlants" id="TraesKARUn01G0149350.1">
    <property type="protein sequence ID" value="cds.TraesKARUn01G0149350.1"/>
    <property type="gene ID" value="TraesKARUn01G0149350"/>
</dbReference>
<dbReference type="EnsemblPlants" id="TraesKARUn01G0149430.1">
    <property type="protein sequence ID" value="cds.TraesKARUn01G0149430.1"/>
    <property type="gene ID" value="TraesKARUn01G0149430"/>
</dbReference>
<dbReference type="EnsemblPlants" id="TraesKARUn01G0149660.1">
    <property type="protein sequence ID" value="cds.TraesKARUn01G0149660.1"/>
    <property type="gene ID" value="TraesKARUn01G0149660"/>
</dbReference>
<dbReference type="EnsemblPlants" id="TraesKARUn01G0150240.1">
    <property type="protein sequence ID" value="cds.TraesKARUn01G0150240.1"/>
    <property type="gene ID" value="TraesKARUn01G0150240"/>
</dbReference>
<dbReference type="EnsemblPlants" id="TraesKARUn01G0153700.1">
    <property type="protein sequence ID" value="cds.TraesKARUn01G0153700.1"/>
    <property type="gene ID" value="TraesKARUn01G0153700"/>
</dbReference>
<dbReference type="EnsemblPlants" id="TraesKARUn01G0154750.1">
    <property type="protein sequence ID" value="cds.TraesKARUn01G0154750.1"/>
    <property type="gene ID" value="TraesKARUn01G0154750"/>
</dbReference>
<dbReference type="EnsemblPlants" id="TraesKARUn01G0154780.1">
    <property type="protein sequence ID" value="cds.TraesKARUn01G0154780.1"/>
    <property type="gene ID" value="TraesKARUn01G0154780"/>
</dbReference>
<dbReference type="EnsemblPlants" id="TraesKARUn01G0162740.1">
    <property type="protein sequence ID" value="cds.TraesKARUn01G0162740.1"/>
    <property type="gene ID" value="TraesKARUn01G0162740"/>
</dbReference>
<dbReference type="EnsemblPlants" id="TraesKARUn01G0163020.1">
    <property type="protein sequence ID" value="cds.TraesKARUn01G0163020.1"/>
    <property type="gene ID" value="TraesKARUn01G0163020"/>
</dbReference>
<dbReference type="EnsemblPlants" id="TraesKARUn01G0164100.1">
    <property type="protein sequence ID" value="cds.TraesKARUn01G0164100.1"/>
    <property type="gene ID" value="TraesKARUn01G0164100"/>
</dbReference>
<dbReference type="EnsemblPlants" id="TraesKARUn01G0165850.1">
    <property type="protein sequence ID" value="cds.TraesKARUn01G0165850.1"/>
    <property type="gene ID" value="TraesKARUn01G0165850"/>
</dbReference>
<dbReference type="EnsemblPlants" id="TraesKARUn01G0172320.1">
    <property type="protein sequence ID" value="cds.TraesKARUn01G0172320.1"/>
    <property type="gene ID" value="TraesKARUn01G0172320"/>
</dbReference>
<dbReference type="EnsemblPlants" id="TraesKARUn01G0179250.1">
    <property type="protein sequence ID" value="cds.TraesKARUn01G0179250.1"/>
    <property type="gene ID" value="TraesKARUn01G0179250"/>
</dbReference>
<dbReference type="EnsemblPlants" id="TraesKARUn01G0179630.1">
    <property type="protein sequence ID" value="cds.TraesKARUn01G0179630.1"/>
    <property type="gene ID" value="TraesKARUn01G0179630"/>
</dbReference>
<dbReference type="EnsemblPlants" id="TraesKARUn01G0180010.1">
    <property type="protein sequence ID" value="cds.TraesKARUn01G0180010.1"/>
    <property type="gene ID" value="TraesKARUn01G0180010"/>
</dbReference>
<dbReference type="EnsemblPlants" id="TraesKARUn01G0180170.1">
    <property type="protein sequence ID" value="cds.TraesKARUn01G0180170.1"/>
    <property type="gene ID" value="TraesKARUn01G0180170"/>
</dbReference>
<dbReference type="EnsemblPlants" id="TraesKARUn01G0180330.1">
    <property type="protein sequence ID" value="cds.TraesKARUn01G0180330.1"/>
    <property type="gene ID" value="TraesKARUn01G0180330"/>
</dbReference>
<dbReference type="EnsemblPlants" id="TraesKARUn01G0180880.1">
    <property type="protein sequence ID" value="cds.TraesKARUn01G0180880.1"/>
    <property type="gene ID" value="TraesKARUn01G0180880"/>
</dbReference>
<dbReference type="EnsemblPlants" id="TraesKARUn01G0181390.1">
    <property type="protein sequence ID" value="cds.TraesKARUn01G0181390.1"/>
    <property type="gene ID" value="TraesKARUn01G0181390"/>
</dbReference>
<dbReference type="EnsemblPlants" id="TraesKARUn01G0182150.1">
    <property type="protein sequence ID" value="cds.TraesKARUn01G0182150.1"/>
    <property type="gene ID" value="TraesKARUn01G0182150"/>
</dbReference>
<dbReference type="EnsemblPlants" id="TraesKARUn01G0187210.1">
    <property type="protein sequence ID" value="cds.TraesKARUn01G0187210.1"/>
    <property type="gene ID" value="TraesKARUn01G0187210"/>
</dbReference>
<dbReference type="EnsemblPlants" id="TraesKARUn01G0188550.1">
    <property type="protein sequence ID" value="cds.TraesKARUn01G0188550.1"/>
    <property type="gene ID" value="TraesKARUn01G0188550"/>
</dbReference>
<dbReference type="EnsemblPlants" id="TraesKARUn01G0188880.1">
    <property type="protein sequence ID" value="cds.TraesKARUn01G0188880.1"/>
    <property type="gene ID" value="TraesKARUn01G0188880"/>
</dbReference>
<dbReference type="EnsemblPlants" id="TraesLAC1A03G00074950.1">
    <property type="protein sequence ID" value="TraesLAC1A03G00074950.1.CDS1"/>
    <property type="gene ID" value="TraesLAC1A03G00074950"/>
</dbReference>
<dbReference type="EnsemblPlants" id="TraesLAC1D03G00529030.1">
    <property type="protein sequence ID" value="TraesLAC1D03G00529030.1.CDS1"/>
    <property type="gene ID" value="TraesLAC1D03G00529030"/>
</dbReference>
<dbReference type="EnsemblPlants" id="TraesLAC2D03G01141830.1">
    <property type="protein sequence ID" value="TraesLAC2D03G01141830.1.CDS1"/>
    <property type="gene ID" value="TraesLAC2D03G01141830"/>
</dbReference>
<dbReference type="EnsemblPlants" id="TraesLAC2D03G01243530.1">
    <property type="protein sequence ID" value="TraesLAC2D03G01243530.1.CDS1"/>
    <property type="gene ID" value="TraesLAC2D03G01243530"/>
</dbReference>
<dbReference type="EnsemblPlants" id="TraesLACUn03G04594620.1">
    <property type="protein sequence ID" value="TraesLACUn03G04594620.1.CDS1"/>
    <property type="gene ID" value="TraesLACUn03G04594620"/>
</dbReference>
<dbReference type="EnsemblPlants" id="TraesLDM1A03G00072400.1">
    <property type="protein sequence ID" value="TraesLDM1A03G00072400.1.CDS1"/>
    <property type="gene ID" value="TraesLDM1A03G00072400"/>
</dbReference>
<dbReference type="EnsemblPlants" id="TraesLDM1D03G00486560.1">
    <property type="protein sequence ID" value="TraesLDM1D03G00486560.1.CDS1"/>
    <property type="gene ID" value="TraesLDM1D03G00486560"/>
</dbReference>
<dbReference type="EnsemblPlants" id="TraesLDM1D03G00528260.1">
    <property type="protein sequence ID" value="TraesLDM1D03G00528260.1.CDS1"/>
    <property type="gene ID" value="TraesLDM1D03G00528260"/>
</dbReference>
<dbReference type="EnsemblPlants" id="TraesLDM2D03G01191290.1">
    <property type="protein sequence ID" value="TraesLDM2D03G01191290.1.CDS1"/>
    <property type="gene ID" value="TraesLDM2D03G01191290"/>
</dbReference>
<dbReference type="EnsemblPlants" id="TraesLDM2D03G01292570.1">
    <property type="protein sequence ID" value="TraesLDM2D03G01292570.1.CDS1"/>
    <property type="gene ID" value="TraesLDM2D03G01292570"/>
</dbReference>
<dbReference type="EnsemblPlants" id="TraesLDMUn03G04580300.1">
    <property type="protein sequence ID" value="TraesLDMUn03G04580300.1.CDS1"/>
    <property type="gene ID" value="TraesLDMUn03G04580300"/>
</dbReference>
<dbReference type="EnsemblPlants" id="TraesMAC1A03G00073840.1">
    <property type="protein sequence ID" value="TraesMAC1A03G00073840.1.CDS1"/>
    <property type="gene ID" value="TraesMAC1A03G00073840"/>
</dbReference>
<dbReference type="EnsemblPlants" id="TraesMAC1D03G00525050.1">
    <property type="protein sequence ID" value="TraesMAC1D03G00525050.1.CDS1"/>
    <property type="gene ID" value="TraesMAC1D03G00525050"/>
</dbReference>
<dbReference type="EnsemblPlants" id="TraesMAC2B03G00857550.1">
    <property type="protein sequence ID" value="TraesMAC2B03G00857550.1.CDS1"/>
    <property type="gene ID" value="TraesMAC2B03G00857550"/>
</dbReference>
<dbReference type="EnsemblPlants" id="TraesMAC2D03G01188380.1">
    <property type="protein sequence ID" value="TraesMAC2D03G01188380.1.CDS1"/>
    <property type="gene ID" value="TraesMAC2D03G01188380"/>
</dbReference>
<dbReference type="EnsemblPlants" id="TraesMAC2D03G01289990.1">
    <property type="protein sequence ID" value="TraesMAC2D03G01289990.1.CDS1"/>
    <property type="gene ID" value="TraesMAC2D03G01289990"/>
</dbReference>
<dbReference type="EnsemblPlants" id="TraesMACUn03G04626270.1">
    <property type="protein sequence ID" value="TraesMACUn03G04626270.1.CDS1"/>
    <property type="gene ID" value="TraesMACUn03G04626270"/>
</dbReference>
<dbReference type="EnsemblPlants" id="TraesMACUn03G04629960.1">
    <property type="protein sequence ID" value="TraesMACUn03G04629960.1.CDS1"/>
    <property type="gene ID" value="TraesMACUn03G04629960"/>
</dbReference>
<dbReference type="EnsemblPlants" id="TraesNOR1A03G00072250.1">
    <property type="protein sequence ID" value="TraesNOR1A03G00072250.1.CDS1"/>
    <property type="gene ID" value="TraesNOR1A03G00072250"/>
</dbReference>
<dbReference type="EnsemblPlants" id="TraesNOR1D03G00431340.1">
    <property type="protein sequence ID" value="TraesNOR1D03G00431340.1.CDS1"/>
    <property type="gene ID" value="TraesNOR1D03G00431340"/>
</dbReference>
<dbReference type="EnsemblPlants" id="TraesNOR1D03G00533670.1">
    <property type="protein sequence ID" value="TraesNOR1D03G00533670.1.CDS1"/>
    <property type="gene ID" value="TraesNOR1D03G00533670"/>
</dbReference>
<dbReference type="EnsemblPlants" id="TraesNOR2D03G01206690.1">
    <property type="protein sequence ID" value="TraesNOR2D03G01206690.1.CDS1"/>
    <property type="gene ID" value="TraesNOR2D03G01206690"/>
</dbReference>
<dbReference type="EnsemblPlants" id="TraesNOR2D03G01308290.1">
    <property type="protein sequence ID" value="TraesNOR2D03G01308290.1.CDS1"/>
    <property type="gene ID" value="TraesNOR2D03G01308290"/>
</dbReference>
<dbReference type="EnsemblPlants" id="TraesNOR3B03G01628260.1">
    <property type="protein sequence ID" value="TraesNOR3B03G01628260.1.CDS1"/>
    <property type="gene ID" value="TraesNOR3B03G01628260"/>
</dbReference>
<dbReference type="EnsemblPlants" id="TraesNORUn03G04770220.1">
    <property type="protein sequence ID" value="TraesNORUn03G04770220.1.CDS1"/>
    <property type="gene ID" value="TraesNORUn03G04770220"/>
</dbReference>
<dbReference type="EnsemblPlants" id="TraesPARA_EIv1.0_0063850.1">
    <property type="protein sequence ID" value="TraesPARA_EIv1.0_0063850.1.CDS1"/>
    <property type="gene ID" value="TraesPARA_EIv1.0_0063850"/>
</dbReference>
<dbReference type="EnsemblPlants" id="TraesPARA_EIv1.0_0296430.1">
    <property type="protein sequence ID" value="TraesPARA_EIv1.0_0296430.1.CDS1"/>
    <property type="gene ID" value="TraesPARA_EIv1.0_0296430"/>
</dbReference>
<dbReference type="EnsemblPlants" id="TraesPARA_EIv1.0_0693180.1">
    <property type="protein sequence ID" value="TraesPARA_EIv1.0_0693180.1.CDS1"/>
    <property type="gene ID" value="TraesPARA_EIv1.0_0693180"/>
</dbReference>
<dbReference type="EnsemblPlants" id="TraesPARA_EIv1.0_0757200.1">
    <property type="protein sequence ID" value="TraesPARA_EIv1.0_0757200.1.CDS1"/>
    <property type="gene ID" value="TraesPARA_EIv1.0_0757200"/>
</dbReference>
<dbReference type="EnsemblPlants" id="TraesPARA_EIv1.0_0758280.1">
    <property type="protein sequence ID" value="TraesPARA_EIv1.0_0758280.1.CDS1"/>
    <property type="gene ID" value="TraesPARA_EIv1.0_0758280"/>
</dbReference>
<dbReference type="EnsemblPlants" id="TraesPARA_EIv1.0_1062620.1">
    <property type="protein sequence ID" value="TraesPARA_EIv1.0_1062620.1.CDS1"/>
    <property type="gene ID" value="TraesPARA_EIv1.0_1062620"/>
</dbReference>
<dbReference type="EnsemblPlants" id="TraesPARA_EIv1.0_2054960.1">
    <property type="protein sequence ID" value="TraesPARA_EIv1.0_2054960.1.CDS1"/>
    <property type="gene ID" value="TraesPARA_EIv1.0_2054960"/>
</dbReference>
<dbReference type="EnsemblPlants" id="TraesPARA_EIv1.0_2055550.1">
    <property type="protein sequence ID" value="TraesPARA_EIv1.0_2055550.1.CDS1"/>
    <property type="gene ID" value="TraesPARA_EIv1.0_2055550"/>
</dbReference>
<dbReference type="EnsemblPlants" id="TraesPARA_EIv1.0_2645370.1">
    <property type="protein sequence ID" value="TraesPARA_EIv1.0_2645370.1.CDS1"/>
    <property type="gene ID" value="TraesPARA_EIv1.0_2645370"/>
</dbReference>
<dbReference type="EnsemblPlants" id="TraesPARA_EIv1.0_2649160.1">
    <property type="protein sequence ID" value="TraesPARA_EIv1.0_2649160.1.CDS1"/>
    <property type="gene ID" value="TraesPARA_EIv1.0_2649160"/>
</dbReference>
<dbReference type="EnsemblPlants" id="TraesPARA_EIv1.0_2657000.1">
    <property type="protein sequence ID" value="TraesPARA_EIv1.0_2657000.1.CDS1"/>
    <property type="gene ID" value="TraesPARA_EIv1.0_2657000"/>
</dbReference>
<dbReference type="EnsemblPlants" id="TraesPARA_EIv1.0_2663220.1">
    <property type="protein sequence ID" value="TraesPARA_EIv1.0_2663220.1.CDS1"/>
    <property type="gene ID" value="TraesPARA_EIv1.0_2663220"/>
</dbReference>
<dbReference type="EnsemblPlants" id="TraesPARA_EIv1.0_2666690.1">
    <property type="protein sequence ID" value="TraesPARA_EIv1.0_2666690.1.CDS1"/>
    <property type="gene ID" value="TraesPARA_EIv1.0_2666690"/>
</dbReference>
<dbReference type="EnsemblPlants" id="TraesPARA_EIv1.0_2668460.1">
    <property type="protein sequence ID" value="TraesPARA_EIv1.0_2668460.1.CDS1"/>
    <property type="gene ID" value="TraesPARA_EIv1.0_2668460"/>
</dbReference>
<dbReference type="EnsemblPlants" id="TraesPARA_EIv1.0_2671430.1">
    <property type="protein sequence ID" value="TraesPARA_EIv1.0_2671430.1.CDS1"/>
    <property type="gene ID" value="TraesPARA_EIv1.0_2671430"/>
</dbReference>
<dbReference type="EnsemblPlants" id="TraesPARA_EIv1.0_2680940.1">
    <property type="protein sequence ID" value="TraesPARA_EIv1.0_2680940.1.CDS1"/>
    <property type="gene ID" value="TraesPARA_EIv1.0_2680940"/>
</dbReference>
<dbReference type="EnsemblPlants" id="TraesPARA_EIv1.0_2681130.1">
    <property type="protein sequence ID" value="TraesPARA_EIv1.0_2681130.1.CDS1"/>
    <property type="gene ID" value="TraesPARA_EIv1.0_2681130"/>
</dbReference>
<dbReference type="EnsemblPlants" id="TraesPARA_EIv1.0_2681800.1">
    <property type="protein sequence ID" value="TraesPARA_EIv1.0_2681800.1.CDS1"/>
    <property type="gene ID" value="TraesPARA_EIv1.0_2681800"/>
</dbReference>
<dbReference type="EnsemblPlants" id="TraesRN1A0100990300.1">
    <property type="protein sequence ID" value="TraesRN1A0100990300.1"/>
    <property type="gene ID" value="TraesRN1A0100990300"/>
</dbReference>
<dbReference type="EnsemblPlants" id="TraesRN1A0100990400.1">
    <property type="protein sequence ID" value="TraesRN1A0100990400.1"/>
    <property type="gene ID" value="TraesRN1A0100990400"/>
</dbReference>
<dbReference type="EnsemblPlants" id="TraesRN1D0100750200.1">
    <property type="protein sequence ID" value="TraesRN1D0100750200.1"/>
    <property type="gene ID" value="TraesRN1D0100750200"/>
</dbReference>
<dbReference type="EnsemblPlants" id="TraesRN2D0100666500.1">
    <property type="protein sequence ID" value="TraesRN2D0100666500.1"/>
    <property type="gene ID" value="TraesRN2D0100666500"/>
</dbReference>
<dbReference type="EnsemblPlants" id="TraesRN2D0101204900.1">
    <property type="protein sequence ID" value="TraesRN2D0101204900.1"/>
    <property type="gene ID" value="TraesRN2D0101204900"/>
</dbReference>
<dbReference type="EnsemblPlants" id="TraesRN3B0100437400.1">
    <property type="protein sequence ID" value="TraesRN3B0100437400.1"/>
    <property type="gene ID" value="TraesRN3B0100437400"/>
</dbReference>
<dbReference type="EnsemblPlants" id="TraesRN3D0100107100.1">
    <property type="protein sequence ID" value="TraesRN3D0100107100.1"/>
    <property type="gene ID" value="TraesRN3D0100107100"/>
</dbReference>
<dbReference type="EnsemblPlants" id="TraesRN5D0100537700.1">
    <property type="protein sequence ID" value="TraesRN5D0100537700.1"/>
    <property type="gene ID" value="TraesRN5D0100537700"/>
</dbReference>
<dbReference type="EnsemblPlants" id="TraesRN6D0100806800.1">
    <property type="protein sequence ID" value="TraesRN6D0100806800.1"/>
    <property type="gene ID" value="TraesRN6D0100806800"/>
</dbReference>
<dbReference type="EnsemblPlants" id="TraesSTA1A03G00072910.1">
    <property type="protein sequence ID" value="TraesSTA1A03G00072910.1.CDS1"/>
    <property type="gene ID" value="TraesSTA1A03G00072910"/>
</dbReference>
<dbReference type="EnsemblPlants" id="TraesSTA1D03G00524560.1">
    <property type="protein sequence ID" value="TraesSTA1D03G00524560.1.CDS1"/>
    <property type="gene ID" value="TraesSTA1D03G00524560"/>
</dbReference>
<dbReference type="EnsemblPlants" id="TraesSTA2D03G01179380.1">
    <property type="protein sequence ID" value="TraesSTA2D03G01179380.1.CDS1"/>
    <property type="gene ID" value="TraesSTA2D03G01179380"/>
</dbReference>
<dbReference type="EnsemblPlants" id="TraesSTA2D03G01280420.1">
    <property type="protein sequence ID" value="TraesSTA2D03G01280420.1.CDS1"/>
    <property type="gene ID" value="TraesSTA2D03G01280420"/>
</dbReference>
<dbReference type="EnsemblPlants" id="TraesSTAUn03G04568920.1">
    <property type="protein sequence ID" value="TraesSTAUn03G04568920.1.CDS1"/>
    <property type="gene ID" value="TraesSTAUn03G04568920"/>
</dbReference>
<dbReference type="EnsemblPlants" id="TraesSYM1A03G00075300.1">
    <property type="protein sequence ID" value="TraesSYM1A03G00075300.1.CDS1"/>
    <property type="gene ID" value="TraesSYM1A03G00075300"/>
</dbReference>
<dbReference type="EnsemblPlants" id="TraesSYM1D03G00532470.1">
    <property type="protein sequence ID" value="TraesSYM1D03G00532470.1.CDS1"/>
    <property type="gene ID" value="TraesSYM1D03G00532470"/>
</dbReference>
<dbReference type="EnsemblPlants" id="TraesSYM2B03G00870950.1">
    <property type="protein sequence ID" value="TraesSYM2B03G00870950.1.CDS1"/>
    <property type="gene ID" value="TraesSYM2B03G00870950"/>
</dbReference>
<dbReference type="EnsemblPlants" id="TraesSYM2D03G01205430.1">
    <property type="protein sequence ID" value="TraesSYM2D03G01205430.1.CDS1"/>
    <property type="gene ID" value="TraesSYM2D03G01205430"/>
</dbReference>
<dbReference type="EnsemblPlants" id="TraesSYM2D03G01310130.1">
    <property type="protein sequence ID" value="TraesSYM2D03G01310130.1.CDS1"/>
    <property type="gene ID" value="TraesSYM2D03G01310130"/>
</dbReference>
<dbReference type="EnsemblPlants" id="TraesWEE_scaffold_058266_01G000100.1">
    <property type="protein sequence ID" value="TraesWEE_scaffold_058266_01G000100.1"/>
    <property type="gene ID" value="TraesWEE_scaffold_058266_01G000100"/>
</dbReference>
<dbReference type="EnsemblPlants" id="TraesWEE_scaffold_219805_01G000500.1">
    <property type="protein sequence ID" value="TraesWEE_scaffold_219805_01G000500.1"/>
    <property type="gene ID" value="TraesWEE_scaffold_219805_01G000500"/>
</dbReference>
<dbReference type="GeneID" id="803176"/>
<dbReference type="Gramene" id="TraesARI1A03G00074290.1">
    <property type="protein sequence ID" value="TraesARI1A03G00074290.1.CDS1"/>
    <property type="gene ID" value="TraesARI1A03G00074290"/>
</dbReference>
<dbReference type="Gramene" id="TraesARI1D03G00531660.1">
    <property type="protein sequence ID" value="TraesARI1D03G00531660.1.CDS1"/>
    <property type="gene ID" value="TraesARI1D03G00531660"/>
</dbReference>
<dbReference type="Gramene" id="TraesARI2D03G01206590.1">
    <property type="protein sequence ID" value="TraesARI2D03G01206590.1.CDS1"/>
    <property type="gene ID" value="TraesARI2D03G01206590"/>
</dbReference>
<dbReference type="Gramene" id="TraesARI2D03G01311340.1">
    <property type="protein sequence ID" value="TraesARI2D03G01311340.1.CDS1"/>
    <property type="gene ID" value="TraesARI2D03G01311340"/>
</dbReference>
<dbReference type="Gramene" id="TraesARIUn03G04713460.1">
    <property type="protein sequence ID" value="TraesARIUn03G04713460.1.CDS1"/>
    <property type="gene ID" value="TraesARIUn03G04713460"/>
</dbReference>
<dbReference type="Gramene" id="TraesCAD_scaffold_023365_01G000100.1">
    <property type="protein sequence ID" value="TraesCAD_scaffold_023365_01G000100.1"/>
    <property type="gene ID" value="TraesCAD_scaffold_023365_01G000100"/>
</dbReference>
<dbReference type="Gramene" id="TraesCS1A02G148500.1">
    <property type="protein sequence ID" value="TraesCS1A02G148500.1.cds1"/>
    <property type="gene ID" value="TraesCS1A02G148500"/>
</dbReference>
<dbReference type="Gramene" id="TraesCS1A03G0400900.1">
    <property type="protein sequence ID" value="TraesCS1A03G0400900.1.CDS1"/>
    <property type="gene ID" value="TraesCS1A03G0400900"/>
</dbReference>
<dbReference type="Gramene" id="TraesCS1D02G295400.1">
    <property type="protein sequence ID" value="TraesCS1D02G295400.1.cds1"/>
    <property type="gene ID" value="TraesCS1D02G295400"/>
</dbReference>
<dbReference type="Gramene" id="TraesCS1D03G0706300.1">
    <property type="protein sequence ID" value="TraesCS1D03G0706300.1.CDS1"/>
    <property type="gene ID" value="TraesCS1D03G0706300"/>
</dbReference>
<dbReference type="Gramene" id="TraesCS2D02G270700.1">
    <property type="protein sequence ID" value="TraesCS2D02G270700.1.cds1"/>
    <property type="gene ID" value="TraesCS2D02G270700"/>
</dbReference>
<dbReference type="Gramene" id="TraesCS2D02G553800.1">
    <property type="protein sequence ID" value="TraesCS2D02G553800.1.cds1"/>
    <property type="gene ID" value="TraesCS2D02G553800"/>
</dbReference>
<dbReference type="Gramene" id="TraesCS2D03G0626300.1">
    <property type="protein sequence ID" value="TraesCS2D03G0626300.1.CDS1"/>
    <property type="gene ID" value="TraesCS2D03G0626300"/>
</dbReference>
<dbReference type="Gramene" id="TraesCS2D03G1232500.1">
    <property type="protein sequence ID" value="TraesCS2D03G1232500.1.CDS1"/>
    <property type="gene ID" value="TraesCS2D03G1232500"/>
</dbReference>
<dbReference type="Gramene" id="TraesCS6D03G0762500.1">
    <property type="protein sequence ID" value="TraesCS6D03G0762500.1.CDS1"/>
    <property type="gene ID" value="TraesCS6D03G0762500"/>
</dbReference>
<dbReference type="Gramene" id="TraesCSU02G261900.1">
    <property type="protein sequence ID" value="TraesCSU02G261900.1.cds1"/>
    <property type="gene ID" value="TraesCSU02G261900"/>
</dbReference>
<dbReference type="Gramene" id="TraesCSU03G0512200.1">
    <property type="protein sequence ID" value="TraesCSU03G0512200.1.CDS1"/>
    <property type="gene ID" value="TraesCSU03G0512200"/>
</dbReference>
<dbReference type="Gramene" id="TraesJAG1A03G00072630.1">
    <property type="protein sequence ID" value="TraesJAG1A03G00072630.1.CDS1"/>
    <property type="gene ID" value="TraesJAG1A03G00072630"/>
</dbReference>
<dbReference type="Gramene" id="TraesJAG1D03G00525350.1">
    <property type="protein sequence ID" value="TraesJAG1D03G00525350.1.CDS1"/>
    <property type="gene ID" value="TraesJAG1D03G00525350"/>
</dbReference>
<dbReference type="Gramene" id="TraesJAG2D03G01196780.1">
    <property type="protein sequence ID" value="TraesJAG2D03G01196780.1.CDS1"/>
    <property type="gene ID" value="TraesJAG2D03G01196780"/>
</dbReference>
<dbReference type="Gramene" id="TraesJAG2D03G01300360.1">
    <property type="protein sequence ID" value="TraesJAG2D03G01300360.1.CDS1"/>
    <property type="gene ID" value="TraesJAG2D03G01300360"/>
</dbReference>
<dbReference type="Gramene" id="TraesJAGUn03G04586940.1">
    <property type="protein sequence ID" value="TraesJAGUn03G04586940.1.CDS1"/>
    <property type="gene ID" value="TraesJAGUn03G04586940"/>
</dbReference>
<dbReference type="Gramene" id="TraesJUL1A03G00072070.1">
    <property type="protein sequence ID" value="TraesJUL1A03G00072070.1.CDS1"/>
    <property type="gene ID" value="TraesJUL1A03G00072070"/>
</dbReference>
<dbReference type="Gramene" id="TraesJUL1D03G00528660.1">
    <property type="protein sequence ID" value="TraesJUL1D03G00528660.1.CDS1"/>
    <property type="gene ID" value="TraesJUL1D03G00528660"/>
</dbReference>
<dbReference type="Gramene" id="TraesJUL2D03G01196640.1">
    <property type="protein sequence ID" value="TraesJUL2D03G01196640.1.CDS1"/>
    <property type="gene ID" value="TraesJUL2D03G01196640"/>
</dbReference>
<dbReference type="Gramene" id="TraesJUL2D03G01303030.1">
    <property type="protein sequence ID" value="TraesJUL2D03G01303030.1.CDS1"/>
    <property type="gene ID" value="TraesJUL2D03G01303030"/>
</dbReference>
<dbReference type="Gramene" id="TraesJUL2D03G01304600.1">
    <property type="protein sequence ID" value="TraesJUL2D03G01304600.1.CDS1"/>
    <property type="gene ID" value="TraesJUL2D03G01304600"/>
</dbReference>
<dbReference type="Gramene" id="TraesKAR1A01G0166580.1">
    <property type="protein sequence ID" value="cds.TraesKAR1A01G0166580.1"/>
    <property type="gene ID" value="TraesKAR1A01G0166580"/>
</dbReference>
<dbReference type="Gramene" id="TraesKAR1D01G0283980.1">
    <property type="protein sequence ID" value="cds.TraesKAR1D01G0283980.1"/>
    <property type="gene ID" value="TraesKAR1D01G0283980"/>
</dbReference>
<dbReference type="Gramene" id="TraesKAR2B01G0069070.1">
    <property type="protein sequence ID" value="cds.TraesKAR2B01G0069070.1"/>
    <property type="gene ID" value="TraesKAR2B01G0069070"/>
</dbReference>
<dbReference type="Gramene" id="TraesKAR2D01G0244240.1">
    <property type="protein sequence ID" value="cds.TraesKAR2D01G0244240.1"/>
    <property type="gene ID" value="TraesKAR2D01G0244240"/>
</dbReference>
<dbReference type="Gramene" id="TraesKAR2D01G0456620.1">
    <property type="protein sequence ID" value="cds.TraesKAR2D01G0456620.1"/>
    <property type="gene ID" value="TraesKAR2D01G0456620"/>
</dbReference>
<dbReference type="Gramene" id="TraesKAR2D01G0458620.1">
    <property type="protein sequence ID" value="cds.TraesKAR2D01G0458620.1"/>
    <property type="gene ID" value="TraesKAR2D01G0458620"/>
</dbReference>
<dbReference type="Gramene" id="TraesKAR3D01G0037610.1">
    <property type="protein sequence ID" value="cds.TraesKAR3D01G0037610.1"/>
    <property type="gene ID" value="TraesKAR3D01G0037610"/>
</dbReference>
<dbReference type="Gramene" id="TraesKAR6B01G0219440.1">
    <property type="protein sequence ID" value="cds.TraesKAR6B01G0219440.1"/>
    <property type="gene ID" value="TraesKAR6B01G0219440"/>
</dbReference>
<dbReference type="Gramene" id="TraesKAR6B01G0220190.1">
    <property type="protein sequence ID" value="cds.TraesKAR6B01G0220190.1"/>
    <property type="gene ID" value="TraesKAR6B01G0220190"/>
</dbReference>
<dbReference type="Gramene" id="TraesKARUn01G0032930.1">
    <property type="protein sequence ID" value="cds.TraesKARUn01G0032930.1"/>
    <property type="gene ID" value="TraesKARUn01G0032930"/>
</dbReference>
<dbReference type="Gramene" id="TraesKARUn01G0035400.1">
    <property type="protein sequence ID" value="cds.TraesKARUn01G0035400.1"/>
    <property type="gene ID" value="TraesKARUn01G0035400"/>
</dbReference>
<dbReference type="Gramene" id="TraesKARUn01G0036580.1">
    <property type="protein sequence ID" value="cds.TraesKARUn01G0036580.1"/>
    <property type="gene ID" value="TraesKARUn01G0036580"/>
</dbReference>
<dbReference type="Gramene" id="TraesKARUn01G0036850.1">
    <property type="protein sequence ID" value="cds.TraesKARUn01G0036850.1"/>
    <property type="gene ID" value="TraesKARUn01G0036850"/>
</dbReference>
<dbReference type="Gramene" id="TraesKARUn01G0037150.1">
    <property type="protein sequence ID" value="cds.TraesKARUn01G0037150.1"/>
    <property type="gene ID" value="TraesKARUn01G0037150"/>
</dbReference>
<dbReference type="Gramene" id="TraesKARUn01G0064380.1">
    <property type="protein sequence ID" value="cds.TraesKARUn01G0064380.1"/>
    <property type="gene ID" value="TraesKARUn01G0064380"/>
</dbReference>
<dbReference type="Gramene" id="TraesKARUn01G0065690.1">
    <property type="protein sequence ID" value="cds.TraesKARUn01G0065690.1"/>
    <property type="gene ID" value="TraesKARUn01G0065690"/>
</dbReference>
<dbReference type="Gramene" id="TraesKARUn01G0065830.1">
    <property type="protein sequence ID" value="cds.TraesKARUn01G0065830.1"/>
    <property type="gene ID" value="TraesKARUn01G0065830"/>
</dbReference>
<dbReference type="Gramene" id="TraesKARUn01G0066310.1">
    <property type="protein sequence ID" value="cds.TraesKARUn01G0066310.1"/>
    <property type="gene ID" value="TraesKARUn01G0066310"/>
</dbReference>
<dbReference type="Gramene" id="TraesKARUn01G0066400.1">
    <property type="protein sequence ID" value="cds.TraesKARUn01G0066400.1"/>
    <property type="gene ID" value="TraesKARUn01G0066400"/>
</dbReference>
<dbReference type="Gramene" id="TraesKARUn01G0066500.1">
    <property type="protein sequence ID" value="cds.TraesKARUn01G0066500.1"/>
    <property type="gene ID" value="TraesKARUn01G0066500"/>
</dbReference>
<dbReference type="Gramene" id="TraesKARUn01G0067200.1">
    <property type="protein sequence ID" value="cds.TraesKARUn01G0067200.1"/>
    <property type="gene ID" value="TraesKARUn01G0067200"/>
</dbReference>
<dbReference type="Gramene" id="TraesKARUn01G0067860.1">
    <property type="protein sequence ID" value="cds.TraesKARUn01G0067860.1"/>
    <property type="gene ID" value="TraesKARUn01G0067860"/>
</dbReference>
<dbReference type="Gramene" id="TraesKARUn01G0069290.1">
    <property type="protein sequence ID" value="cds.TraesKARUn01G0069290.1"/>
    <property type="gene ID" value="TraesKARUn01G0069290"/>
</dbReference>
<dbReference type="Gramene" id="TraesKARUn01G0069710.1">
    <property type="protein sequence ID" value="cds.TraesKARUn01G0069710.1"/>
    <property type="gene ID" value="TraesKARUn01G0069710"/>
</dbReference>
<dbReference type="Gramene" id="TraesKARUn01G0070360.1">
    <property type="protein sequence ID" value="cds.TraesKARUn01G0070360.1"/>
    <property type="gene ID" value="TraesKARUn01G0070360"/>
</dbReference>
<dbReference type="Gramene" id="TraesKARUn01G0071530.1">
    <property type="protein sequence ID" value="cds.TraesKARUn01G0071530.1"/>
    <property type="gene ID" value="TraesKARUn01G0071530"/>
</dbReference>
<dbReference type="Gramene" id="TraesKARUn01G0071710.1">
    <property type="protein sequence ID" value="cds.TraesKARUn01G0071710.1"/>
    <property type="gene ID" value="TraesKARUn01G0071710"/>
</dbReference>
<dbReference type="Gramene" id="TraesKARUn01G0072440.1">
    <property type="protein sequence ID" value="cds.TraesKARUn01G0072440.1"/>
    <property type="gene ID" value="TraesKARUn01G0072440"/>
</dbReference>
<dbReference type="Gramene" id="TraesKARUn01G0080110.1">
    <property type="protein sequence ID" value="cds.TraesKARUn01G0080110.1"/>
    <property type="gene ID" value="TraesKARUn01G0080110"/>
</dbReference>
<dbReference type="Gramene" id="TraesKARUn01G0097030.1">
    <property type="protein sequence ID" value="cds.TraesKARUn01G0097030.1"/>
    <property type="gene ID" value="TraesKARUn01G0097030"/>
</dbReference>
<dbReference type="Gramene" id="TraesKARUn01G0097790.1">
    <property type="protein sequence ID" value="cds.TraesKARUn01G0097790.1"/>
    <property type="gene ID" value="TraesKARUn01G0097790"/>
</dbReference>
<dbReference type="Gramene" id="TraesKARUn01G0098460.1">
    <property type="protein sequence ID" value="cds.TraesKARUn01G0098460.1"/>
    <property type="gene ID" value="TraesKARUn01G0098460"/>
</dbReference>
<dbReference type="Gramene" id="TraesKARUn01G0098760.1">
    <property type="protein sequence ID" value="cds.TraesKARUn01G0098760.1"/>
    <property type="gene ID" value="TraesKARUn01G0098760"/>
</dbReference>
<dbReference type="Gramene" id="TraesKARUn01G0099050.1">
    <property type="protein sequence ID" value="cds.TraesKARUn01G0099050.1"/>
    <property type="gene ID" value="TraesKARUn01G0099050"/>
</dbReference>
<dbReference type="Gramene" id="TraesKARUn01G0099770.1">
    <property type="protein sequence ID" value="cds.TraesKARUn01G0099770.1"/>
    <property type="gene ID" value="TraesKARUn01G0099770"/>
</dbReference>
<dbReference type="Gramene" id="TraesKARUn01G0099910.1">
    <property type="protein sequence ID" value="cds.TraesKARUn01G0099910.1"/>
    <property type="gene ID" value="TraesKARUn01G0099910"/>
</dbReference>
<dbReference type="Gramene" id="TraesKARUn01G0100040.1">
    <property type="protein sequence ID" value="cds.TraesKARUn01G0100040.1"/>
    <property type="gene ID" value="TraesKARUn01G0100040"/>
</dbReference>
<dbReference type="Gramene" id="TraesKARUn01G0100210.1">
    <property type="protein sequence ID" value="cds.TraesKARUn01G0100210.1"/>
    <property type="gene ID" value="TraesKARUn01G0100210"/>
</dbReference>
<dbReference type="Gramene" id="TraesKARUn01G0105470.1">
    <property type="protein sequence ID" value="cds.TraesKARUn01G0105470.1"/>
    <property type="gene ID" value="TraesKARUn01G0105470"/>
</dbReference>
<dbReference type="Gramene" id="TraesKARUn01G0115840.1">
    <property type="protein sequence ID" value="cds.TraesKARUn01G0115840.1"/>
    <property type="gene ID" value="TraesKARUn01G0115840"/>
</dbReference>
<dbReference type="Gramene" id="TraesKARUn01G0116060.1">
    <property type="protein sequence ID" value="cds.TraesKARUn01G0116060.1"/>
    <property type="gene ID" value="TraesKARUn01G0116060"/>
</dbReference>
<dbReference type="Gramene" id="TraesKARUn01G0116610.1">
    <property type="protein sequence ID" value="cds.TraesKARUn01G0116610.1"/>
    <property type="gene ID" value="TraesKARUn01G0116610"/>
</dbReference>
<dbReference type="Gramene" id="TraesKARUn01G0116800.1">
    <property type="protein sequence ID" value="cds.TraesKARUn01G0116800.1"/>
    <property type="gene ID" value="TraesKARUn01G0116800"/>
</dbReference>
<dbReference type="Gramene" id="TraesKARUn01G0116910.1">
    <property type="protein sequence ID" value="cds.TraesKARUn01G0116910.1"/>
    <property type="gene ID" value="TraesKARUn01G0116910"/>
</dbReference>
<dbReference type="Gramene" id="TraesKARUn01G0116980.1">
    <property type="protein sequence ID" value="cds.TraesKARUn01G0116980.1"/>
    <property type="gene ID" value="TraesKARUn01G0116980"/>
</dbReference>
<dbReference type="Gramene" id="TraesKARUn01G0123280.1">
    <property type="protein sequence ID" value="cds.TraesKARUn01G0123280.1"/>
    <property type="gene ID" value="TraesKARUn01G0123280"/>
</dbReference>
<dbReference type="Gramene" id="TraesKARUn01G0123430.1">
    <property type="protein sequence ID" value="cds.TraesKARUn01G0123430.1"/>
    <property type="gene ID" value="TraesKARUn01G0123430"/>
</dbReference>
<dbReference type="Gramene" id="TraesKARUn01G0123600.1">
    <property type="protein sequence ID" value="cds.TraesKARUn01G0123600.1"/>
    <property type="gene ID" value="TraesKARUn01G0123600"/>
</dbReference>
<dbReference type="Gramene" id="TraesKARUn01G0125370.1">
    <property type="protein sequence ID" value="cds.TraesKARUn01G0125370.1"/>
    <property type="gene ID" value="TraesKARUn01G0125370"/>
</dbReference>
<dbReference type="Gramene" id="TraesKARUn01G0130610.1">
    <property type="protein sequence ID" value="cds.TraesKARUn01G0130610.1"/>
    <property type="gene ID" value="TraesKARUn01G0130610"/>
</dbReference>
<dbReference type="Gramene" id="TraesKARUn01G0140990.1">
    <property type="protein sequence ID" value="cds.TraesKARUn01G0140990.1"/>
    <property type="gene ID" value="TraesKARUn01G0140990"/>
</dbReference>
<dbReference type="Gramene" id="TraesKARUn01G0141950.1">
    <property type="protein sequence ID" value="cds.TraesKARUn01G0141950.1"/>
    <property type="gene ID" value="TraesKARUn01G0141950"/>
</dbReference>
<dbReference type="Gramene" id="TraesKARUn01G0148440.1">
    <property type="protein sequence ID" value="cds.TraesKARUn01G0148440.1"/>
    <property type="gene ID" value="TraesKARUn01G0148440"/>
</dbReference>
<dbReference type="Gramene" id="TraesKARUn01G0149110.1">
    <property type="protein sequence ID" value="cds.TraesKARUn01G0149110.1"/>
    <property type="gene ID" value="TraesKARUn01G0149110"/>
</dbReference>
<dbReference type="Gramene" id="TraesKARUn01G0149350.1">
    <property type="protein sequence ID" value="cds.TraesKARUn01G0149350.1"/>
    <property type="gene ID" value="TraesKARUn01G0149350"/>
</dbReference>
<dbReference type="Gramene" id="TraesKARUn01G0149430.1">
    <property type="protein sequence ID" value="cds.TraesKARUn01G0149430.1"/>
    <property type="gene ID" value="TraesKARUn01G0149430"/>
</dbReference>
<dbReference type="Gramene" id="TraesKARUn01G0149660.1">
    <property type="protein sequence ID" value="cds.TraesKARUn01G0149660.1"/>
    <property type="gene ID" value="TraesKARUn01G0149660"/>
</dbReference>
<dbReference type="Gramene" id="TraesKARUn01G0150240.1">
    <property type="protein sequence ID" value="cds.TraesKARUn01G0150240.1"/>
    <property type="gene ID" value="TraesKARUn01G0150240"/>
</dbReference>
<dbReference type="Gramene" id="TraesKARUn01G0153700.1">
    <property type="protein sequence ID" value="cds.TraesKARUn01G0153700.1"/>
    <property type="gene ID" value="TraesKARUn01G0153700"/>
</dbReference>
<dbReference type="Gramene" id="TraesKARUn01G0154750.1">
    <property type="protein sequence ID" value="cds.TraesKARUn01G0154750.1"/>
    <property type="gene ID" value="TraesKARUn01G0154750"/>
</dbReference>
<dbReference type="Gramene" id="TraesKARUn01G0154780.1">
    <property type="protein sequence ID" value="cds.TraesKARUn01G0154780.1"/>
    <property type="gene ID" value="TraesKARUn01G0154780"/>
</dbReference>
<dbReference type="Gramene" id="TraesKARUn01G0162740.1">
    <property type="protein sequence ID" value="cds.TraesKARUn01G0162740.1"/>
    <property type="gene ID" value="TraesKARUn01G0162740"/>
</dbReference>
<dbReference type="Gramene" id="TraesKARUn01G0163020.1">
    <property type="protein sequence ID" value="cds.TraesKARUn01G0163020.1"/>
    <property type="gene ID" value="TraesKARUn01G0163020"/>
</dbReference>
<dbReference type="Gramene" id="TraesKARUn01G0164100.1">
    <property type="protein sequence ID" value="cds.TraesKARUn01G0164100.1"/>
    <property type="gene ID" value="TraesKARUn01G0164100"/>
</dbReference>
<dbReference type="Gramene" id="TraesKARUn01G0165850.1">
    <property type="protein sequence ID" value="cds.TraesKARUn01G0165850.1"/>
    <property type="gene ID" value="TraesKARUn01G0165850"/>
</dbReference>
<dbReference type="Gramene" id="TraesKARUn01G0172320.1">
    <property type="protein sequence ID" value="cds.TraesKARUn01G0172320.1"/>
    <property type="gene ID" value="TraesKARUn01G0172320"/>
</dbReference>
<dbReference type="Gramene" id="TraesKARUn01G0179250.1">
    <property type="protein sequence ID" value="cds.TraesKARUn01G0179250.1"/>
    <property type="gene ID" value="TraesKARUn01G0179250"/>
</dbReference>
<dbReference type="Gramene" id="TraesKARUn01G0179630.1">
    <property type="protein sequence ID" value="cds.TraesKARUn01G0179630.1"/>
    <property type="gene ID" value="TraesKARUn01G0179630"/>
</dbReference>
<dbReference type="Gramene" id="TraesKARUn01G0180010.1">
    <property type="protein sequence ID" value="cds.TraesKARUn01G0180010.1"/>
    <property type="gene ID" value="TraesKARUn01G0180010"/>
</dbReference>
<dbReference type="Gramene" id="TraesKARUn01G0180170.1">
    <property type="protein sequence ID" value="cds.TraesKARUn01G0180170.1"/>
    <property type="gene ID" value="TraesKARUn01G0180170"/>
</dbReference>
<dbReference type="Gramene" id="TraesKARUn01G0180330.1">
    <property type="protein sequence ID" value="cds.TraesKARUn01G0180330.1"/>
    <property type="gene ID" value="TraesKARUn01G0180330"/>
</dbReference>
<dbReference type="Gramene" id="TraesKARUn01G0180880.1">
    <property type="protein sequence ID" value="cds.TraesKARUn01G0180880.1"/>
    <property type="gene ID" value="TraesKARUn01G0180880"/>
</dbReference>
<dbReference type="Gramene" id="TraesKARUn01G0181390.1">
    <property type="protein sequence ID" value="cds.TraesKARUn01G0181390.1"/>
    <property type="gene ID" value="TraesKARUn01G0181390"/>
</dbReference>
<dbReference type="Gramene" id="TraesKARUn01G0182150.1">
    <property type="protein sequence ID" value="cds.TraesKARUn01G0182150.1"/>
    <property type="gene ID" value="TraesKARUn01G0182150"/>
</dbReference>
<dbReference type="Gramene" id="TraesKARUn01G0187210.1">
    <property type="protein sequence ID" value="cds.TraesKARUn01G0187210.1"/>
    <property type="gene ID" value="TraesKARUn01G0187210"/>
</dbReference>
<dbReference type="Gramene" id="TraesKARUn01G0188550.1">
    <property type="protein sequence ID" value="cds.TraesKARUn01G0188550.1"/>
    <property type="gene ID" value="TraesKARUn01G0188550"/>
</dbReference>
<dbReference type="Gramene" id="TraesKARUn01G0188880.1">
    <property type="protein sequence ID" value="cds.TraesKARUn01G0188880.1"/>
    <property type="gene ID" value="TraesKARUn01G0188880"/>
</dbReference>
<dbReference type="Gramene" id="TraesLAC1A03G00074950.1">
    <property type="protein sequence ID" value="TraesLAC1A03G00074950.1.CDS1"/>
    <property type="gene ID" value="TraesLAC1A03G00074950"/>
</dbReference>
<dbReference type="Gramene" id="TraesLAC1D03G00529030.1">
    <property type="protein sequence ID" value="TraesLAC1D03G00529030.1.CDS1"/>
    <property type="gene ID" value="TraesLAC1D03G00529030"/>
</dbReference>
<dbReference type="Gramene" id="TraesLAC2D03G01141830.1">
    <property type="protein sequence ID" value="TraesLAC2D03G01141830.1.CDS1"/>
    <property type="gene ID" value="TraesLAC2D03G01141830"/>
</dbReference>
<dbReference type="Gramene" id="TraesLAC2D03G01243530.1">
    <property type="protein sequence ID" value="TraesLAC2D03G01243530.1.CDS1"/>
    <property type="gene ID" value="TraesLAC2D03G01243530"/>
</dbReference>
<dbReference type="Gramene" id="TraesLACUn03G04594620.1">
    <property type="protein sequence ID" value="TraesLACUn03G04594620.1.CDS1"/>
    <property type="gene ID" value="TraesLACUn03G04594620"/>
</dbReference>
<dbReference type="Gramene" id="TraesLDM1A03G00072400.1">
    <property type="protein sequence ID" value="TraesLDM1A03G00072400.1.CDS1"/>
    <property type="gene ID" value="TraesLDM1A03G00072400"/>
</dbReference>
<dbReference type="Gramene" id="TraesLDM1D03G00486560.1">
    <property type="protein sequence ID" value="TraesLDM1D03G00486560.1.CDS1"/>
    <property type="gene ID" value="TraesLDM1D03G00486560"/>
</dbReference>
<dbReference type="Gramene" id="TraesLDM1D03G00528260.1">
    <property type="protein sequence ID" value="TraesLDM1D03G00528260.1.CDS1"/>
    <property type="gene ID" value="TraesLDM1D03G00528260"/>
</dbReference>
<dbReference type="Gramene" id="TraesLDM2D03G01191290.1">
    <property type="protein sequence ID" value="TraesLDM2D03G01191290.1.CDS1"/>
    <property type="gene ID" value="TraesLDM2D03G01191290"/>
</dbReference>
<dbReference type="Gramene" id="TraesLDM2D03G01292570.1">
    <property type="protein sequence ID" value="TraesLDM2D03G01292570.1.CDS1"/>
    <property type="gene ID" value="TraesLDM2D03G01292570"/>
</dbReference>
<dbReference type="Gramene" id="TraesLDMUn03G04580300.1">
    <property type="protein sequence ID" value="TraesLDMUn03G04580300.1.CDS1"/>
    <property type="gene ID" value="TraesLDMUn03G04580300"/>
</dbReference>
<dbReference type="Gramene" id="TraesMAC1A03G00073840.1">
    <property type="protein sequence ID" value="TraesMAC1A03G00073840.1.CDS1"/>
    <property type="gene ID" value="TraesMAC1A03G00073840"/>
</dbReference>
<dbReference type="Gramene" id="TraesMAC1D03G00525050.1">
    <property type="protein sequence ID" value="TraesMAC1D03G00525050.1.CDS1"/>
    <property type="gene ID" value="TraesMAC1D03G00525050"/>
</dbReference>
<dbReference type="Gramene" id="TraesMAC2B03G00857550.1">
    <property type="protein sequence ID" value="TraesMAC2B03G00857550.1.CDS1"/>
    <property type="gene ID" value="TraesMAC2B03G00857550"/>
</dbReference>
<dbReference type="Gramene" id="TraesMAC2D03G01188380.1">
    <property type="protein sequence ID" value="TraesMAC2D03G01188380.1.CDS1"/>
    <property type="gene ID" value="TraesMAC2D03G01188380"/>
</dbReference>
<dbReference type="Gramene" id="TraesMAC2D03G01289990.1">
    <property type="protein sequence ID" value="TraesMAC2D03G01289990.1.CDS1"/>
    <property type="gene ID" value="TraesMAC2D03G01289990"/>
</dbReference>
<dbReference type="Gramene" id="TraesMACUn03G04626270.1">
    <property type="protein sequence ID" value="TraesMACUn03G04626270.1.CDS1"/>
    <property type="gene ID" value="TraesMACUn03G04626270"/>
</dbReference>
<dbReference type="Gramene" id="TraesMACUn03G04629960.1">
    <property type="protein sequence ID" value="TraesMACUn03G04629960.1.CDS1"/>
    <property type="gene ID" value="TraesMACUn03G04629960"/>
</dbReference>
<dbReference type="Gramene" id="TraesNOR1A03G00072250.1">
    <property type="protein sequence ID" value="TraesNOR1A03G00072250.1.CDS1"/>
    <property type="gene ID" value="TraesNOR1A03G00072250"/>
</dbReference>
<dbReference type="Gramene" id="TraesNOR1D03G00431340.1">
    <property type="protein sequence ID" value="TraesNOR1D03G00431340.1.CDS1"/>
    <property type="gene ID" value="TraesNOR1D03G00431340"/>
</dbReference>
<dbReference type="Gramene" id="TraesNOR1D03G00533670.1">
    <property type="protein sequence ID" value="TraesNOR1D03G00533670.1.CDS1"/>
    <property type="gene ID" value="TraesNOR1D03G00533670"/>
</dbReference>
<dbReference type="Gramene" id="TraesNOR2D03G01206690.1">
    <property type="protein sequence ID" value="TraesNOR2D03G01206690.1.CDS1"/>
    <property type="gene ID" value="TraesNOR2D03G01206690"/>
</dbReference>
<dbReference type="Gramene" id="TraesNOR2D03G01308290.1">
    <property type="protein sequence ID" value="TraesNOR2D03G01308290.1.CDS1"/>
    <property type="gene ID" value="TraesNOR2D03G01308290"/>
</dbReference>
<dbReference type="Gramene" id="TraesNOR3B03G01628260.1">
    <property type="protein sequence ID" value="TraesNOR3B03G01628260.1.CDS1"/>
    <property type="gene ID" value="TraesNOR3B03G01628260"/>
</dbReference>
<dbReference type="Gramene" id="TraesNORUn03G04770220.1">
    <property type="protein sequence ID" value="TraesNORUn03G04770220.1.CDS1"/>
    <property type="gene ID" value="TraesNORUn03G04770220"/>
</dbReference>
<dbReference type="Gramene" id="TraesPARA_EIv1.0_0063850.1">
    <property type="protein sequence ID" value="TraesPARA_EIv1.0_0063850.1.CDS1"/>
    <property type="gene ID" value="TraesPARA_EIv1.0_0063850"/>
</dbReference>
<dbReference type="Gramene" id="TraesPARA_EIv1.0_0296430.1">
    <property type="protein sequence ID" value="TraesPARA_EIv1.0_0296430.1.CDS1"/>
    <property type="gene ID" value="TraesPARA_EIv1.0_0296430"/>
</dbReference>
<dbReference type="Gramene" id="TraesPARA_EIv1.0_0693180.1">
    <property type="protein sequence ID" value="TraesPARA_EIv1.0_0693180.1.CDS1"/>
    <property type="gene ID" value="TraesPARA_EIv1.0_0693180"/>
</dbReference>
<dbReference type="Gramene" id="TraesPARA_EIv1.0_0757200.1">
    <property type="protein sequence ID" value="TraesPARA_EIv1.0_0757200.1.CDS1"/>
    <property type="gene ID" value="TraesPARA_EIv1.0_0757200"/>
</dbReference>
<dbReference type="Gramene" id="TraesPARA_EIv1.0_0758280.1">
    <property type="protein sequence ID" value="TraesPARA_EIv1.0_0758280.1.CDS1"/>
    <property type="gene ID" value="TraesPARA_EIv1.0_0758280"/>
</dbReference>
<dbReference type="Gramene" id="TraesPARA_EIv1.0_1062620.1">
    <property type="protein sequence ID" value="TraesPARA_EIv1.0_1062620.1.CDS1"/>
    <property type="gene ID" value="TraesPARA_EIv1.0_1062620"/>
</dbReference>
<dbReference type="Gramene" id="TraesPARA_EIv1.0_2054960.1">
    <property type="protein sequence ID" value="TraesPARA_EIv1.0_2054960.1.CDS1"/>
    <property type="gene ID" value="TraesPARA_EIv1.0_2054960"/>
</dbReference>
<dbReference type="Gramene" id="TraesPARA_EIv1.0_2055550.1">
    <property type="protein sequence ID" value="TraesPARA_EIv1.0_2055550.1.CDS1"/>
    <property type="gene ID" value="TraesPARA_EIv1.0_2055550"/>
</dbReference>
<dbReference type="Gramene" id="TraesPARA_EIv1.0_2645370.1">
    <property type="protein sequence ID" value="TraesPARA_EIv1.0_2645370.1.CDS1"/>
    <property type="gene ID" value="TraesPARA_EIv1.0_2645370"/>
</dbReference>
<dbReference type="Gramene" id="TraesPARA_EIv1.0_2649160.1">
    <property type="protein sequence ID" value="TraesPARA_EIv1.0_2649160.1.CDS1"/>
    <property type="gene ID" value="TraesPARA_EIv1.0_2649160"/>
</dbReference>
<dbReference type="Gramene" id="TraesPARA_EIv1.0_2657000.1">
    <property type="protein sequence ID" value="TraesPARA_EIv1.0_2657000.1.CDS1"/>
    <property type="gene ID" value="TraesPARA_EIv1.0_2657000"/>
</dbReference>
<dbReference type="Gramene" id="TraesPARA_EIv1.0_2663220.1">
    <property type="protein sequence ID" value="TraesPARA_EIv1.0_2663220.1.CDS1"/>
    <property type="gene ID" value="TraesPARA_EIv1.0_2663220"/>
</dbReference>
<dbReference type="Gramene" id="TraesPARA_EIv1.0_2666690.1">
    <property type="protein sequence ID" value="TraesPARA_EIv1.0_2666690.1.CDS1"/>
    <property type="gene ID" value="TraesPARA_EIv1.0_2666690"/>
</dbReference>
<dbReference type="Gramene" id="TraesPARA_EIv1.0_2668460.1">
    <property type="protein sequence ID" value="TraesPARA_EIv1.0_2668460.1.CDS1"/>
    <property type="gene ID" value="TraesPARA_EIv1.0_2668460"/>
</dbReference>
<dbReference type="Gramene" id="TraesPARA_EIv1.0_2671430.1">
    <property type="protein sequence ID" value="TraesPARA_EIv1.0_2671430.1.CDS1"/>
    <property type="gene ID" value="TraesPARA_EIv1.0_2671430"/>
</dbReference>
<dbReference type="Gramene" id="TraesPARA_EIv1.0_2680940.1">
    <property type="protein sequence ID" value="TraesPARA_EIv1.0_2680940.1.CDS1"/>
    <property type="gene ID" value="TraesPARA_EIv1.0_2680940"/>
</dbReference>
<dbReference type="Gramene" id="TraesPARA_EIv1.0_2681130.1">
    <property type="protein sequence ID" value="TraesPARA_EIv1.0_2681130.1.CDS1"/>
    <property type="gene ID" value="TraesPARA_EIv1.0_2681130"/>
</dbReference>
<dbReference type="Gramene" id="TraesPARA_EIv1.0_2681800.1">
    <property type="protein sequence ID" value="TraesPARA_EIv1.0_2681800.1.CDS1"/>
    <property type="gene ID" value="TraesPARA_EIv1.0_2681800"/>
</dbReference>
<dbReference type="Gramene" id="TraesRN1A0100990300.1">
    <property type="protein sequence ID" value="TraesRN1A0100990300.1"/>
    <property type="gene ID" value="TraesRN1A0100990300"/>
</dbReference>
<dbReference type="Gramene" id="TraesRN1A0100990400.1">
    <property type="protein sequence ID" value="TraesRN1A0100990400.1"/>
    <property type="gene ID" value="TraesRN1A0100990400"/>
</dbReference>
<dbReference type="Gramene" id="TraesRN1D0100750200.1">
    <property type="protein sequence ID" value="TraesRN1D0100750200.1"/>
    <property type="gene ID" value="TraesRN1D0100750200"/>
</dbReference>
<dbReference type="Gramene" id="TraesRN2D0100666500.1">
    <property type="protein sequence ID" value="TraesRN2D0100666500.1"/>
    <property type="gene ID" value="TraesRN2D0100666500"/>
</dbReference>
<dbReference type="Gramene" id="TraesRN2D0101204900.1">
    <property type="protein sequence ID" value="TraesRN2D0101204900.1"/>
    <property type="gene ID" value="TraesRN2D0101204900"/>
</dbReference>
<dbReference type="Gramene" id="TraesRN3B0100437400.1">
    <property type="protein sequence ID" value="TraesRN3B0100437400.1"/>
    <property type="gene ID" value="TraesRN3B0100437400"/>
</dbReference>
<dbReference type="Gramene" id="TraesRN3D0100107100.1">
    <property type="protein sequence ID" value="TraesRN3D0100107100.1"/>
    <property type="gene ID" value="TraesRN3D0100107100"/>
</dbReference>
<dbReference type="Gramene" id="TraesRN5D0100537700.1">
    <property type="protein sequence ID" value="TraesRN5D0100537700.1"/>
    <property type="gene ID" value="TraesRN5D0100537700"/>
</dbReference>
<dbReference type="Gramene" id="TraesRN6D0100806800.1">
    <property type="protein sequence ID" value="TraesRN6D0100806800.1"/>
    <property type="gene ID" value="TraesRN6D0100806800"/>
</dbReference>
<dbReference type="Gramene" id="TraesSTA1A03G00072910.1">
    <property type="protein sequence ID" value="TraesSTA1A03G00072910.1.CDS1"/>
    <property type="gene ID" value="TraesSTA1A03G00072910"/>
</dbReference>
<dbReference type="Gramene" id="TraesSTA1D03G00524560.1">
    <property type="protein sequence ID" value="TraesSTA1D03G00524560.1.CDS1"/>
    <property type="gene ID" value="TraesSTA1D03G00524560"/>
</dbReference>
<dbReference type="Gramene" id="TraesSTA2D03G01179380.1">
    <property type="protein sequence ID" value="TraesSTA2D03G01179380.1.CDS1"/>
    <property type="gene ID" value="TraesSTA2D03G01179380"/>
</dbReference>
<dbReference type="Gramene" id="TraesSTA2D03G01280420.1">
    <property type="protein sequence ID" value="TraesSTA2D03G01280420.1.CDS1"/>
    <property type="gene ID" value="TraesSTA2D03G01280420"/>
</dbReference>
<dbReference type="Gramene" id="TraesSTAUn03G04568920.1">
    <property type="protein sequence ID" value="TraesSTAUn03G04568920.1.CDS1"/>
    <property type="gene ID" value="TraesSTAUn03G04568920"/>
</dbReference>
<dbReference type="Gramene" id="TraesSYM1A03G00075300.1">
    <property type="protein sequence ID" value="TraesSYM1A03G00075300.1.CDS1"/>
    <property type="gene ID" value="TraesSYM1A03G00075300"/>
</dbReference>
<dbReference type="Gramene" id="TraesSYM1D03G00532470.1">
    <property type="protein sequence ID" value="TraesSYM1D03G00532470.1.CDS1"/>
    <property type="gene ID" value="TraesSYM1D03G00532470"/>
</dbReference>
<dbReference type="Gramene" id="TraesSYM2B03G00870950.1">
    <property type="protein sequence ID" value="TraesSYM2B03G00870950.1.CDS1"/>
    <property type="gene ID" value="TraesSYM2B03G00870950"/>
</dbReference>
<dbReference type="Gramene" id="TraesSYM2D03G01205430.1">
    <property type="protein sequence ID" value="TraesSYM2D03G01205430.1.CDS1"/>
    <property type="gene ID" value="TraesSYM2D03G01205430"/>
</dbReference>
<dbReference type="Gramene" id="TraesSYM2D03G01310130.1">
    <property type="protein sequence ID" value="TraesSYM2D03G01310130.1.CDS1"/>
    <property type="gene ID" value="TraesSYM2D03G01310130"/>
</dbReference>
<dbReference type="Gramene" id="TraesWEE_scaffold_058266_01G000100.1">
    <property type="protein sequence ID" value="TraesWEE_scaffold_058266_01G000100.1"/>
    <property type="gene ID" value="TraesWEE_scaffold_058266_01G000100"/>
</dbReference>
<dbReference type="Gramene" id="TraesWEE_scaffold_219805_01G000500.1">
    <property type="protein sequence ID" value="TraesWEE_scaffold_219805_01G000500.1"/>
    <property type="gene ID" value="TraesWEE_scaffold_219805_01G000500"/>
</dbReference>
<dbReference type="KEGG" id="taes:803176"/>
<dbReference type="eggNOG" id="ENOG502S2SP">
    <property type="taxonomic scope" value="Eukaryota"/>
</dbReference>
<dbReference type="HOGENOM" id="CLU_194095_0_0_1"/>
<dbReference type="OMA" id="VRYWVIH"/>
<dbReference type="OrthoDB" id="722814at2759"/>
<dbReference type="Proteomes" id="UP000019116">
    <property type="component" value="Chloroplast"/>
</dbReference>
<dbReference type="GO" id="GO:0009535">
    <property type="term" value="C:chloroplast thylakoid membrane"/>
    <property type="evidence" value="ECO:0007669"/>
    <property type="project" value="UniProtKB-SubCell"/>
</dbReference>
<dbReference type="GO" id="GO:0009539">
    <property type="term" value="C:photosystem II reaction center"/>
    <property type="evidence" value="ECO:0007669"/>
    <property type="project" value="InterPro"/>
</dbReference>
<dbReference type="GO" id="GO:0009055">
    <property type="term" value="F:electron transfer activity"/>
    <property type="evidence" value="ECO:0007669"/>
    <property type="project" value="UniProtKB-UniRule"/>
</dbReference>
<dbReference type="GO" id="GO:0020037">
    <property type="term" value="F:heme binding"/>
    <property type="evidence" value="ECO:0007669"/>
    <property type="project" value="InterPro"/>
</dbReference>
<dbReference type="GO" id="GO:0005506">
    <property type="term" value="F:iron ion binding"/>
    <property type="evidence" value="ECO:0007669"/>
    <property type="project" value="UniProtKB-UniRule"/>
</dbReference>
<dbReference type="GO" id="GO:0009767">
    <property type="term" value="P:photosynthetic electron transport chain"/>
    <property type="evidence" value="ECO:0007669"/>
    <property type="project" value="InterPro"/>
</dbReference>
<dbReference type="Gene3D" id="1.20.5.860">
    <property type="entry name" value="Photosystem II cytochrome b559, alpha subunit"/>
    <property type="match status" value="1"/>
</dbReference>
<dbReference type="HAMAP" id="MF_00642">
    <property type="entry name" value="PSII_PsbE"/>
    <property type="match status" value="1"/>
</dbReference>
<dbReference type="InterPro" id="IPR006217">
    <property type="entry name" value="PSII_cyt_b559_asu"/>
</dbReference>
<dbReference type="InterPro" id="IPR037025">
    <property type="entry name" value="PSII_cyt_b559_asu_sf"/>
</dbReference>
<dbReference type="InterPro" id="IPR006216">
    <property type="entry name" value="PSII_cyt_b559_CS"/>
</dbReference>
<dbReference type="InterPro" id="IPR013081">
    <property type="entry name" value="PSII_cyt_b559_N"/>
</dbReference>
<dbReference type="InterPro" id="IPR013082">
    <property type="entry name" value="PSII_cytb559_asu_lum"/>
</dbReference>
<dbReference type="NCBIfam" id="TIGR01332">
    <property type="entry name" value="cyt_b559_alpha"/>
    <property type="match status" value="1"/>
</dbReference>
<dbReference type="PANTHER" id="PTHR33391:SF13">
    <property type="entry name" value="CYTOCHROME B559 SUBUNIT ALPHA"/>
    <property type="match status" value="1"/>
</dbReference>
<dbReference type="PANTHER" id="PTHR33391">
    <property type="entry name" value="CYTOCHROME B559 SUBUNIT BETA-RELATED"/>
    <property type="match status" value="1"/>
</dbReference>
<dbReference type="Pfam" id="PF00283">
    <property type="entry name" value="Cytochrom_B559"/>
    <property type="match status" value="1"/>
</dbReference>
<dbReference type="Pfam" id="PF00284">
    <property type="entry name" value="Cytochrom_B559a"/>
    <property type="match status" value="1"/>
</dbReference>
<dbReference type="PIRSF" id="PIRSF000036">
    <property type="entry name" value="PsbE"/>
    <property type="match status" value="1"/>
</dbReference>
<dbReference type="SUPFAM" id="SSF161045">
    <property type="entry name" value="Cytochrome b559 subunits"/>
    <property type="match status" value="1"/>
</dbReference>
<dbReference type="PROSITE" id="PS00537">
    <property type="entry name" value="CYTOCHROME_B559"/>
    <property type="match status" value="1"/>
</dbReference>
<protein>
    <recommendedName>
        <fullName evidence="1">Cytochrome b559 subunit alpha</fullName>
    </recommendedName>
    <alternativeName>
        <fullName evidence="1">PSII reaction center subunit V</fullName>
    </alternativeName>
</protein>
<sequence>MSGSTGERSFADIITSIRYWVIHSITIPSLFIAGWLFVSTGLAYDVFGSPRPNEYFTESRQGIPLITDRFDSLEQLDEFSRSF</sequence>
<accession>P69386</accession>
<accession>P05169</accession>
<accession>P10879</accession>
<accession>Q95H57</accession>
<geneLocation type="chloroplast"/>
<keyword id="KW-0150">Chloroplast</keyword>
<keyword id="KW-0903">Direct protein sequencing</keyword>
<keyword id="KW-0249">Electron transport</keyword>
<keyword id="KW-0349">Heme</keyword>
<keyword id="KW-0408">Iron</keyword>
<keyword id="KW-0472">Membrane</keyword>
<keyword id="KW-0479">Metal-binding</keyword>
<keyword id="KW-0602">Photosynthesis</keyword>
<keyword id="KW-0604">Photosystem II</keyword>
<keyword id="KW-0934">Plastid</keyword>
<keyword id="KW-1185">Reference proteome</keyword>
<keyword id="KW-0793">Thylakoid</keyword>
<keyword id="KW-0812">Transmembrane</keyword>
<keyword id="KW-1133">Transmembrane helix</keyword>
<keyword id="KW-0813">Transport</keyword>
<proteinExistence type="evidence at protein level"/>
<evidence type="ECO:0000255" key="1">
    <source>
        <dbReference type="HAMAP-Rule" id="MF_00642"/>
    </source>
</evidence>
<evidence type="ECO:0000269" key="2">
    <source>
    </source>
</evidence>
<evidence type="ECO:0000269" key="3">
    <source ref="2"/>
</evidence>
<evidence type="ECO:0000305" key="4"/>
<gene>
    <name evidence="1" type="primary">psbE</name>
</gene>
<organism>
    <name type="scientific">Triticum aestivum</name>
    <name type="common">Wheat</name>
    <dbReference type="NCBI Taxonomy" id="4565"/>
    <lineage>
        <taxon>Eukaryota</taxon>
        <taxon>Viridiplantae</taxon>
        <taxon>Streptophyta</taxon>
        <taxon>Embryophyta</taxon>
        <taxon>Tracheophyta</taxon>
        <taxon>Spermatophyta</taxon>
        <taxon>Magnoliopsida</taxon>
        <taxon>Liliopsida</taxon>
        <taxon>Poales</taxon>
        <taxon>Poaceae</taxon>
        <taxon>BOP clade</taxon>
        <taxon>Pooideae</taxon>
        <taxon>Triticodae</taxon>
        <taxon>Triticeae</taxon>
        <taxon>Triticinae</taxon>
        <taxon>Triticum</taxon>
    </lineage>
</organism>